<protein>
    <recommendedName>
        <fullName evidence="2">D-alanine--D-alanine ligase</fullName>
        <ecNumber evidence="2">6.3.2.4</ecNumber>
    </recommendedName>
    <alternativeName>
        <fullName evidence="2">D-Ala-D-Ala ligase</fullName>
    </alternativeName>
    <alternativeName>
        <fullName evidence="2">D-alanylalanine synthetase</fullName>
    </alternativeName>
</protein>
<gene>
    <name evidence="2" type="primary">ddl</name>
    <name type="ordered locus">DR_0362</name>
</gene>
<organism>
    <name type="scientific">Deinococcus radiodurans (strain ATCC 13939 / DSM 20539 / JCM 16871 / CCUG 27074 / LMG 4051 / NBRC 15346 / NCIMB 9279 / VKM B-1422 / R1)</name>
    <dbReference type="NCBI Taxonomy" id="243230"/>
    <lineage>
        <taxon>Bacteria</taxon>
        <taxon>Thermotogati</taxon>
        <taxon>Deinococcota</taxon>
        <taxon>Deinococci</taxon>
        <taxon>Deinococcales</taxon>
        <taxon>Deinococcaceae</taxon>
        <taxon>Deinococcus</taxon>
    </lineage>
</organism>
<comment type="function">
    <text evidence="2">Cell wall formation.</text>
</comment>
<comment type="catalytic activity">
    <reaction evidence="2">
        <text>2 D-alanine + ATP = D-alanyl-D-alanine + ADP + phosphate + H(+)</text>
        <dbReference type="Rhea" id="RHEA:11224"/>
        <dbReference type="ChEBI" id="CHEBI:15378"/>
        <dbReference type="ChEBI" id="CHEBI:30616"/>
        <dbReference type="ChEBI" id="CHEBI:43474"/>
        <dbReference type="ChEBI" id="CHEBI:57416"/>
        <dbReference type="ChEBI" id="CHEBI:57822"/>
        <dbReference type="ChEBI" id="CHEBI:456216"/>
        <dbReference type="EC" id="6.3.2.4"/>
    </reaction>
</comment>
<comment type="cofactor">
    <cofactor evidence="1">
        <name>Mg(2+)</name>
        <dbReference type="ChEBI" id="CHEBI:18420"/>
    </cofactor>
    <cofactor evidence="1">
        <name>Mn(2+)</name>
        <dbReference type="ChEBI" id="CHEBI:29035"/>
    </cofactor>
    <text evidence="1">Binds 2 magnesium or manganese ions per subunit.</text>
</comment>
<comment type="pathway">
    <text evidence="2">Cell wall biogenesis; peptidoglycan biosynthesis.</text>
</comment>
<comment type="subcellular location">
    <subcellularLocation>
        <location evidence="2">Cytoplasm</location>
    </subcellularLocation>
</comment>
<comment type="similarity">
    <text evidence="2">Belongs to the D-alanine--D-alanine ligase family.</text>
</comment>
<feature type="chain" id="PRO_0000177814" description="D-alanine--D-alanine ligase">
    <location>
        <begin position="1"/>
        <end position="339"/>
    </location>
</feature>
<feature type="domain" description="ATP-grasp" evidence="2">
    <location>
        <begin position="126"/>
        <end position="333"/>
    </location>
</feature>
<feature type="binding site" evidence="2">
    <location>
        <begin position="158"/>
        <end position="213"/>
    </location>
    <ligand>
        <name>ATP</name>
        <dbReference type="ChEBI" id="CHEBI:30616"/>
    </ligand>
</feature>
<feature type="binding site" evidence="2">
    <location>
        <position position="286"/>
    </location>
    <ligand>
        <name>Mg(2+)</name>
        <dbReference type="ChEBI" id="CHEBI:18420"/>
        <label>1</label>
    </ligand>
</feature>
<feature type="binding site" evidence="2">
    <location>
        <position position="300"/>
    </location>
    <ligand>
        <name>Mg(2+)</name>
        <dbReference type="ChEBI" id="CHEBI:18420"/>
        <label>1</label>
    </ligand>
</feature>
<feature type="binding site" evidence="2">
    <location>
        <position position="300"/>
    </location>
    <ligand>
        <name>Mg(2+)</name>
        <dbReference type="ChEBI" id="CHEBI:18420"/>
        <label>2</label>
    </ligand>
</feature>
<feature type="binding site" evidence="2">
    <location>
        <position position="302"/>
    </location>
    <ligand>
        <name>Mg(2+)</name>
        <dbReference type="ChEBI" id="CHEBI:18420"/>
        <label>2</label>
    </ligand>
</feature>
<accession>Q9RXF1</accession>
<sequence length="339" mass="36810">MKRRILLLAGGQSGEHEVSLRSARSVLAALPRDQFDVTPVVISKQGRWLPPTETQKALETGVSSQGGDLMLHRAAAAEGYDAVFPLLHGPMGEDGTIQGLLTLAGIPFVGSGVLGSAVSMDKVMTKQVLDSAGIPQVAWRLAVRREWQQTPDAVRARAAELGYPLFVKPANLGSSVGISKVGSPEELDAALTLAFGLDRRVILEAMTPHKPREVEVGILGNDVPVASPVGELSFDADFYDYETKYTEGRAEMHIPARIPPEVSERIRTEALRAFRALDCAGLARVDFFYVEETGELFLNEVNTMPGFTTTSMYPKLFEAAGLSYSELVTRLVELALEER</sequence>
<keyword id="KW-0067">ATP-binding</keyword>
<keyword id="KW-0133">Cell shape</keyword>
<keyword id="KW-0961">Cell wall biogenesis/degradation</keyword>
<keyword id="KW-0963">Cytoplasm</keyword>
<keyword id="KW-0436">Ligase</keyword>
<keyword id="KW-0460">Magnesium</keyword>
<keyword id="KW-0464">Manganese</keyword>
<keyword id="KW-0479">Metal-binding</keyword>
<keyword id="KW-0547">Nucleotide-binding</keyword>
<keyword id="KW-0573">Peptidoglycan synthesis</keyword>
<keyword id="KW-1185">Reference proteome</keyword>
<evidence type="ECO:0000250" key="1"/>
<evidence type="ECO:0000255" key="2">
    <source>
        <dbReference type="HAMAP-Rule" id="MF_00047"/>
    </source>
</evidence>
<reference key="1">
    <citation type="journal article" date="1999" name="Science">
        <title>Genome sequence of the radioresistant bacterium Deinococcus radiodurans R1.</title>
        <authorList>
            <person name="White O."/>
            <person name="Eisen J.A."/>
            <person name="Heidelberg J.F."/>
            <person name="Hickey E.K."/>
            <person name="Peterson J.D."/>
            <person name="Dodson R.J."/>
            <person name="Haft D.H."/>
            <person name="Gwinn M.L."/>
            <person name="Nelson W.C."/>
            <person name="Richardson D.L."/>
            <person name="Moffat K.S."/>
            <person name="Qin H."/>
            <person name="Jiang L."/>
            <person name="Pamphile W."/>
            <person name="Crosby M."/>
            <person name="Shen M."/>
            <person name="Vamathevan J.J."/>
            <person name="Lam P."/>
            <person name="McDonald L.A."/>
            <person name="Utterback T.R."/>
            <person name="Zalewski C."/>
            <person name="Makarova K.S."/>
            <person name="Aravind L."/>
            <person name="Daly M.J."/>
            <person name="Minton K.W."/>
            <person name="Fleischmann R.D."/>
            <person name="Ketchum K.A."/>
            <person name="Nelson K.E."/>
            <person name="Salzberg S.L."/>
            <person name="Smith H.O."/>
            <person name="Venter J.C."/>
            <person name="Fraser C.M."/>
        </authorList>
    </citation>
    <scope>NUCLEOTIDE SEQUENCE [LARGE SCALE GENOMIC DNA]</scope>
    <source>
        <strain>ATCC 13939 / DSM 20539 / JCM 16871 / CCUG 27074 / LMG 4051 / NBRC 15346 / NCIMB 9279 / VKM B-1422 / R1</strain>
    </source>
</reference>
<proteinExistence type="inferred from homology"/>
<dbReference type="EC" id="6.3.2.4" evidence="2"/>
<dbReference type="EMBL" id="AE000513">
    <property type="protein sequence ID" value="AAF09941.1"/>
    <property type="molecule type" value="Genomic_DNA"/>
</dbReference>
<dbReference type="PIR" id="D75529">
    <property type="entry name" value="D75529"/>
</dbReference>
<dbReference type="RefSeq" id="NP_294085.1">
    <property type="nucleotide sequence ID" value="NC_001263.1"/>
</dbReference>
<dbReference type="RefSeq" id="WP_010887007.1">
    <property type="nucleotide sequence ID" value="NC_001263.1"/>
</dbReference>
<dbReference type="SMR" id="Q9RXF1"/>
<dbReference type="FunCoup" id="Q9RXF1">
    <property type="interactions" value="269"/>
</dbReference>
<dbReference type="STRING" id="243230.DR_0362"/>
<dbReference type="PaxDb" id="243230-DR_0362"/>
<dbReference type="EnsemblBacteria" id="AAF09941">
    <property type="protein sequence ID" value="AAF09941"/>
    <property type="gene ID" value="DR_0362"/>
</dbReference>
<dbReference type="GeneID" id="69516594"/>
<dbReference type="KEGG" id="dra:DR_0362"/>
<dbReference type="PATRIC" id="fig|243230.17.peg.533"/>
<dbReference type="eggNOG" id="COG1181">
    <property type="taxonomic scope" value="Bacteria"/>
</dbReference>
<dbReference type="HOGENOM" id="CLU_039268_0_0_0"/>
<dbReference type="InParanoid" id="Q9RXF1"/>
<dbReference type="OrthoDB" id="9813261at2"/>
<dbReference type="UniPathway" id="UPA00219"/>
<dbReference type="Proteomes" id="UP000002524">
    <property type="component" value="Chromosome 1"/>
</dbReference>
<dbReference type="GO" id="GO:0005829">
    <property type="term" value="C:cytosol"/>
    <property type="evidence" value="ECO:0000318"/>
    <property type="project" value="GO_Central"/>
</dbReference>
<dbReference type="GO" id="GO:0005524">
    <property type="term" value="F:ATP binding"/>
    <property type="evidence" value="ECO:0007669"/>
    <property type="project" value="UniProtKB-KW"/>
</dbReference>
<dbReference type="GO" id="GO:0008716">
    <property type="term" value="F:D-alanine-D-alanine ligase activity"/>
    <property type="evidence" value="ECO:0000318"/>
    <property type="project" value="GO_Central"/>
</dbReference>
<dbReference type="GO" id="GO:0046872">
    <property type="term" value="F:metal ion binding"/>
    <property type="evidence" value="ECO:0007669"/>
    <property type="project" value="UniProtKB-KW"/>
</dbReference>
<dbReference type="GO" id="GO:0071555">
    <property type="term" value="P:cell wall organization"/>
    <property type="evidence" value="ECO:0007669"/>
    <property type="project" value="UniProtKB-KW"/>
</dbReference>
<dbReference type="GO" id="GO:0009252">
    <property type="term" value="P:peptidoglycan biosynthetic process"/>
    <property type="evidence" value="ECO:0000318"/>
    <property type="project" value="GO_Central"/>
</dbReference>
<dbReference type="GO" id="GO:0008360">
    <property type="term" value="P:regulation of cell shape"/>
    <property type="evidence" value="ECO:0007669"/>
    <property type="project" value="UniProtKB-KW"/>
</dbReference>
<dbReference type="FunFam" id="3.30.1490.20:FF:000007">
    <property type="entry name" value="D-alanine--D-alanine ligase"/>
    <property type="match status" value="1"/>
</dbReference>
<dbReference type="FunFam" id="3.30.470.20:FF:000008">
    <property type="entry name" value="D-alanine--D-alanine ligase"/>
    <property type="match status" value="1"/>
</dbReference>
<dbReference type="Gene3D" id="3.40.50.20">
    <property type="match status" value="1"/>
</dbReference>
<dbReference type="Gene3D" id="3.30.1490.20">
    <property type="entry name" value="ATP-grasp fold, A domain"/>
    <property type="match status" value="1"/>
</dbReference>
<dbReference type="Gene3D" id="3.30.470.20">
    <property type="entry name" value="ATP-grasp fold, B domain"/>
    <property type="match status" value="1"/>
</dbReference>
<dbReference type="HAMAP" id="MF_00047">
    <property type="entry name" value="Dala_Dala_lig"/>
    <property type="match status" value="1"/>
</dbReference>
<dbReference type="InterPro" id="IPR011761">
    <property type="entry name" value="ATP-grasp"/>
</dbReference>
<dbReference type="InterPro" id="IPR013815">
    <property type="entry name" value="ATP_grasp_subdomain_1"/>
</dbReference>
<dbReference type="InterPro" id="IPR000291">
    <property type="entry name" value="D-Ala_lig_Van_CS"/>
</dbReference>
<dbReference type="InterPro" id="IPR005905">
    <property type="entry name" value="D_ala_D_ala"/>
</dbReference>
<dbReference type="InterPro" id="IPR011095">
    <property type="entry name" value="Dala_Dala_lig_C"/>
</dbReference>
<dbReference type="InterPro" id="IPR011127">
    <property type="entry name" value="Dala_Dala_lig_N"/>
</dbReference>
<dbReference type="InterPro" id="IPR016185">
    <property type="entry name" value="PreATP-grasp_dom_sf"/>
</dbReference>
<dbReference type="NCBIfam" id="TIGR01205">
    <property type="entry name" value="D_ala_D_alaTIGR"/>
    <property type="match status" value="1"/>
</dbReference>
<dbReference type="NCBIfam" id="NF002378">
    <property type="entry name" value="PRK01372.1"/>
    <property type="match status" value="1"/>
</dbReference>
<dbReference type="NCBIfam" id="NF002528">
    <property type="entry name" value="PRK01966.1-4"/>
    <property type="match status" value="1"/>
</dbReference>
<dbReference type="PANTHER" id="PTHR23132">
    <property type="entry name" value="D-ALANINE--D-ALANINE LIGASE"/>
    <property type="match status" value="1"/>
</dbReference>
<dbReference type="PANTHER" id="PTHR23132:SF25">
    <property type="entry name" value="D-ALANINE--D-ALANINE LIGASE A"/>
    <property type="match status" value="1"/>
</dbReference>
<dbReference type="Pfam" id="PF07478">
    <property type="entry name" value="Dala_Dala_lig_C"/>
    <property type="match status" value="1"/>
</dbReference>
<dbReference type="Pfam" id="PF01820">
    <property type="entry name" value="Dala_Dala_lig_N"/>
    <property type="match status" value="1"/>
</dbReference>
<dbReference type="PIRSF" id="PIRSF039102">
    <property type="entry name" value="Ddl/VanB"/>
    <property type="match status" value="1"/>
</dbReference>
<dbReference type="SUPFAM" id="SSF56059">
    <property type="entry name" value="Glutathione synthetase ATP-binding domain-like"/>
    <property type="match status" value="1"/>
</dbReference>
<dbReference type="SUPFAM" id="SSF52440">
    <property type="entry name" value="PreATP-grasp domain"/>
    <property type="match status" value="1"/>
</dbReference>
<dbReference type="PROSITE" id="PS50975">
    <property type="entry name" value="ATP_GRASP"/>
    <property type="match status" value="1"/>
</dbReference>
<dbReference type="PROSITE" id="PS00843">
    <property type="entry name" value="DALA_DALA_LIGASE_1"/>
    <property type="match status" value="1"/>
</dbReference>
<dbReference type="PROSITE" id="PS00844">
    <property type="entry name" value="DALA_DALA_LIGASE_2"/>
    <property type="match status" value="1"/>
</dbReference>
<name>DDL_DEIRA</name>